<feature type="chain" id="PRO_0000275687" description="DNA-directed RNA polymerase subunit alpha">
    <location>
        <begin position="1"/>
        <end position="353"/>
    </location>
</feature>
<feature type="region of interest" description="Alpha N-terminal domain (alpha-NTD)" evidence="1">
    <location>
        <begin position="1"/>
        <end position="234"/>
    </location>
</feature>
<feature type="region of interest" description="Alpha C-terminal domain (alpha-CTD)" evidence="1">
    <location>
        <begin position="267"/>
        <end position="353"/>
    </location>
</feature>
<gene>
    <name evidence="1" type="primary">rpoA</name>
</gene>
<accession>Q0G9T0</accession>
<keyword id="KW-0150">Chloroplast</keyword>
<keyword id="KW-0240">DNA-directed RNA polymerase</keyword>
<keyword id="KW-0548">Nucleotidyltransferase</keyword>
<keyword id="KW-0934">Plastid</keyword>
<keyword id="KW-0804">Transcription</keyword>
<keyword id="KW-0808">Transferase</keyword>
<protein>
    <recommendedName>
        <fullName evidence="1">DNA-directed RNA polymerase subunit alpha</fullName>
        <shortName evidence="1">PEP</shortName>
        <ecNumber evidence="1">2.7.7.6</ecNumber>
    </recommendedName>
    <alternativeName>
        <fullName evidence="1">Plastid-encoded RNA polymerase subunit alpha</fullName>
        <shortName evidence="1">RNA polymerase subunit alpha</shortName>
    </alternativeName>
</protein>
<proteinExistence type="inferred from homology"/>
<evidence type="ECO:0000255" key="1">
    <source>
        <dbReference type="HAMAP-Rule" id="MF_00059"/>
    </source>
</evidence>
<reference key="1">
    <citation type="journal article" date="2006" name="BMC Genomics">
        <title>Complete plastid genome sequence of Daucus carota: implications for biotechnology and phylogeny of angiosperms.</title>
        <authorList>
            <person name="Ruhlman T."/>
            <person name="Lee S.-B."/>
            <person name="Jansen R.K."/>
            <person name="Hostetler J.B."/>
            <person name="Tallon L.J."/>
            <person name="Town C.D."/>
            <person name="Daniell H."/>
        </authorList>
    </citation>
    <scope>NUCLEOTIDE SEQUENCE [LARGE SCALE GENOMIC DNA]</scope>
    <source>
        <strain>cv. Danvers Half-long</strain>
    </source>
</reference>
<organism>
    <name type="scientific">Daucus carota</name>
    <name type="common">Wild carrot</name>
    <dbReference type="NCBI Taxonomy" id="4039"/>
    <lineage>
        <taxon>Eukaryota</taxon>
        <taxon>Viridiplantae</taxon>
        <taxon>Streptophyta</taxon>
        <taxon>Embryophyta</taxon>
        <taxon>Tracheophyta</taxon>
        <taxon>Spermatophyta</taxon>
        <taxon>Magnoliopsida</taxon>
        <taxon>eudicotyledons</taxon>
        <taxon>Gunneridae</taxon>
        <taxon>Pentapetalae</taxon>
        <taxon>asterids</taxon>
        <taxon>campanulids</taxon>
        <taxon>Apiales</taxon>
        <taxon>Apiaceae</taxon>
        <taxon>Apioideae</taxon>
        <taxon>Scandiceae</taxon>
        <taxon>Daucinae</taxon>
        <taxon>Daucus</taxon>
        <taxon>Daucus sect. Daucus</taxon>
    </lineage>
</organism>
<geneLocation type="chloroplast"/>
<sequence length="353" mass="40211">MVREKVTVSTRTLQWKCVESKADNKRLYYGRFILSPLMKGQADTIGISMRRALLGEIEGTCITRAKSEKIPHEYSTLVGIQESVHDILMNLKEIVLRSNLYGTCDASICVRGPGYVTAQDIILPPYVEVVDNTQHIASLTEPIELCIGLQIERNRGYLIKTPNNNSKDGSYPIDAVFMPVRNANHSIHSYGNGNDKQEILFLEIWTNGSLTPKEALHEASRNLIDLFIPFLHTEEENLHLANNQHMVPLPPFTFHDKLDKLRKNKKKRALKSIFIDQSELPPRIYNCLKRSNIYTLLDLLNNSQEDLMKIEHFRIKDVKQILGILEKNFSINLGKKPKMGFESLAQLIDSKSG</sequence>
<name>RPOA_DAUCA</name>
<dbReference type="EC" id="2.7.7.6" evidence="1"/>
<dbReference type="EMBL" id="DQ898156">
    <property type="protein sequence ID" value="ABI32455.1"/>
    <property type="molecule type" value="Genomic_DNA"/>
</dbReference>
<dbReference type="RefSeq" id="YP_740149.1">
    <property type="nucleotide sequence ID" value="NC_008325.1"/>
</dbReference>
<dbReference type="SMR" id="Q0G9T0"/>
<dbReference type="GeneID" id="4266776"/>
<dbReference type="GO" id="GO:0009507">
    <property type="term" value="C:chloroplast"/>
    <property type="evidence" value="ECO:0007669"/>
    <property type="project" value="UniProtKB-SubCell"/>
</dbReference>
<dbReference type="GO" id="GO:0000428">
    <property type="term" value="C:DNA-directed RNA polymerase complex"/>
    <property type="evidence" value="ECO:0007669"/>
    <property type="project" value="UniProtKB-KW"/>
</dbReference>
<dbReference type="GO" id="GO:0005739">
    <property type="term" value="C:mitochondrion"/>
    <property type="evidence" value="ECO:0007669"/>
    <property type="project" value="GOC"/>
</dbReference>
<dbReference type="GO" id="GO:0003677">
    <property type="term" value="F:DNA binding"/>
    <property type="evidence" value="ECO:0007669"/>
    <property type="project" value="UniProtKB-UniRule"/>
</dbReference>
<dbReference type="GO" id="GO:0003899">
    <property type="term" value="F:DNA-directed RNA polymerase activity"/>
    <property type="evidence" value="ECO:0007669"/>
    <property type="project" value="UniProtKB-UniRule"/>
</dbReference>
<dbReference type="GO" id="GO:0046983">
    <property type="term" value="F:protein dimerization activity"/>
    <property type="evidence" value="ECO:0007669"/>
    <property type="project" value="InterPro"/>
</dbReference>
<dbReference type="GO" id="GO:0006351">
    <property type="term" value="P:DNA-templated transcription"/>
    <property type="evidence" value="ECO:0007669"/>
    <property type="project" value="UniProtKB-UniRule"/>
</dbReference>
<dbReference type="CDD" id="cd06928">
    <property type="entry name" value="RNAP_alpha_NTD"/>
    <property type="match status" value="1"/>
</dbReference>
<dbReference type="FunFam" id="1.10.150.20:FF:000021">
    <property type="entry name" value="DNA-directed RNA polymerase subunit alpha"/>
    <property type="match status" value="1"/>
</dbReference>
<dbReference type="FunFam" id="2.170.120.12:FF:000001">
    <property type="entry name" value="DNA-directed RNA polymerase subunit alpha"/>
    <property type="match status" value="1"/>
</dbReference>
<dbReference type="FunFam" id="3.30.1360.10:FF:000039">
    <property type="entry name" value="DNA-directed RNA polymerase subunit alpha"/>
    <property type="match status" value="1"/>
</dbReference>
<dbReference type="Gene3D" id="1.10.150.20">
    <property type="entry name" value="5' to 3' exonuclease, C-terminal subdomain"/>
    <property type="match status" value="1"/>
</dbReference>
<dbReference type="Gene3D" id="2.170.120.12">
    <property type="entry name" value="DNA-directed RNA polymerase, insert domain"/>
    <property type="match status" value="1"/>
</dbReference>
<dbReference type="Gene3D" id="3.30.1360.10">
    <property type="entry name" value="RNA polymerase, RBP11-like subunit"/>
    <property type="match status" value="1"/>
</dbReference>
<dbReference type="HAMAP" id="MF_00059">
    <property type="entry name" value="RNApol_bact_RpoA"/>
    <property type="match status" value="1"/>
</dbReference>
<dbReference type="InterPro" id="IPR011262">
    <property type="entry name" value="DNA-dir_RNA_pol_insert"/>
</dbReference>
<dbReference type="InterPro" id="IPR011263">
    <property type="entry name" value="DNA-dir_RNA_pol_RpoA/D/Rpb3"/>
</dbReference>
<dbReference type="InterPro" id="IPR011773">
    <property type="entry name" value="DNA-dir_RpoA"/>
</dbReference>
<dbReference type="InterPro" id="IPR036603">
    <property type="entry name" value="RBP11-like"/>
</dbReference>
<dbReference type="InterPro" id="IPR011260">
    <property type="entry name" value="RNAP_asu_C"/>
</dbReference>
<dbReference type="InterPro" id="IPR036643">
    <property type="entry name" value="RNApol_insert_sf"/>
</dbReference>
<dbReference type="NCBIfam" id="TIGR02027">
    <property type="entry name" value="rpoA"/>
    <property type="match status" value="1"/>
</dbReference>
<dbReference type="Pfam" id="PF01000">
    <property type="entry name" value="RNA_pol_A_bac"/>
    <property type="match status" value="1"/>
</dbReference>
<dbReference type="Pfam" id="PF03118">
    <property type="entry name" value="RNA_pol_A_CTD"/>
    <property type="match status" value="1"/>
</dbReference>
<dbReference type="Pfam" id="PF01193">
    <property type="entry name" value="RNA_pol_L"/>
    <property type="match status" value="1"/>
</dbReference>
<dbReference type="SMART" id="SM00662">
    <property type="entry name" value="RPOLD"/>
    <property type="match status" value="1"/>
</dbReference>
<dbReference type="SUPFAM" id="SSF47789">
    <property type="entry name" value="C-terminal domain of RNA polymerase alpha subunit"/>
    <property type="match status" value="1"/>
</dbReference>
<dbReference type="SUPFAM" id="SSF56553">
    <property type="entry name" value="Insert subdomain of RNA polymerase alpha subunit"/>
    <property type="match status" value="1"/>
</dbReference>
<dbReference type="SUPFAM" id="SSF55257">
    <property type="entry name" value="RBP11-like subunits of RNA polymerase"/>
    <property type="match status" value="1"/>
</dbReference>
<comment type="function">
    <text evidence="1">DNA-dependent RNA polymerase catalyzes the transcription of DNA into RNA using the four ribonucleoside triphosphates as substrates.</text>
</comment>
<comment type="catalytic activity">
    <reaction evidence="1">
        <text>RNA(n) + a ribonucleoside 5'-triphosphate = RNA(n+1) + diphosphate</text>
        <dbReference type="Rhea" id="RHEA:21248"/>
        <dbReference type="Rhea" id="RHEA-COMP:14527"/>
        <dbReference type="Rhea" id="RHEA-COMP:17342"/>
        <dbReference type="ChEBI" id="CHEBI:33019"/>
        <dbReference type="ChEBI" id="CHEBI:61557"/>
        <dbReference type="ChEBI" id="CHEBI:140395"/>
        <dbReference type="EC" id="2.7.7.6"/>
    </reaction>
</comment>
<comment type="subunit">
    <text evidence="1">In plastids the minimal PEP RNA polymerase catalytic core is composed of four subunits: alpha, beta, beta', and beta''. When a (nuclear-encoded) sigma factor is associated with the core the holoenzyme is formed, which can initiate transcription.</text>
</comment>
<comment type="subcellular location">
    <subcellularLocation>
        <location>Plastid</location>
        <location>Chloroplast</location>
    </subcellularLocation>
</comment>
<comment type="domain">
    <text evidence="1">The N-terminal domain is essential for RNAP assembly and basal transcription, whereas the C-terminal domain is involved in interaction with transcriptional regulators and with upstream promoter elements.</text>
</comment>
<comment type="similarity">
    <text evidence="1">Belongs to the RNA polymerase alpha chain family.</text>
</comment>